<evidence type="ECO:0000250" key="1">
    <source>
        <dbReference type="UniProtKB" id="Q8R2Z3"/>
    </source>
</evidence>
<evidence type="ECO:0000255" key="2"/>
<evidence type="ECO:0000255" key="3">
    <source>
        <dbReference type="PROSITE-ProRule" id="PRU00198"/>
    </source>
</evidence>
<evidence type="ECO:0000269" key="4">
    <source>
    </source>
</evidence>
<evidence type="ECO:0000269" key="5">
    <source>
    </source>
</evidence>
<evidence type="ECO:0000269" key="6">
    <source>
    </source>
</evidence>
<evidence type="ECO:0000269" key="7">
    <source>
    </source>
</evidence>
<evidence type="ECO:0000269" key="8">
    <source>
    </source>
</evidence>
<evidence type="ECO:0000269" key="9">
    <source>
    </source>
</evidence>
<evidence type="ECO:0000269" key="10">
    <source>
    </source>
</evidence>
<evidence type="ECO:0000269" key="11">
    <source>
    </source>
</evidence>
<evidence type="ECO:0000269" key="12">
    <source>
    </source>
</evidence>
<evidence type="ECO:0000269" key="13">
    <source>
    </source>
</evidence>
<evidence type="ECO:0000269" key="14">
    <source>
    </source>
</evidence>
<evidence type="ECO:0000303" key="15">
    <source>
    </source>
</evidence>
<evidence type="ECO:0000303" key="16">
    <source>
    </source>
</evidence>
<evidence type="ECO:0000303" key="17">
    <source>
    </source>
</evidence>
<evidence type="ECO:0000305" key="18"/>
<evidence type="ECO:0000305" key="19">
    <source>
    </source>
</evidence>
<evidence type="ECO:0000312" key="20">
    <source>
        <dbReference type="EMBL" id="AAH94730.1"/>
    </source>
</evidence>
<evidence type="ECO:0000312" key="21">
    <source>
        <dbReference type="EMBL" id="AAI13867.1"/>
    </source>
</evidence>
<evidence type="ECO:0000312" key="22">
    <source>
        <dbReference type="EMBL" id="AAK95665.1"/>
    </source>
</evidence>
<evidence type="ECO:0000312" key="23">
    <source>
        <dbReference type="EMBL" id="CAC88371.1"/>
    </source>
</evidence>
<evidence type="ECO:0000312" key="24">
    <source>
        <dbReference type="EMBL" id="CAC88372.1"/>
    </source>
</evidence>
<evidence type="ECO:0000312" key="25">
    <source>
        <dbReference type="EMBL" id="EAW91679.1"/>
    </source>
</evidence>
<evidence type="ECO:0000312" key="26">
    <source>
        <dbReference type="HGNC" id="HGNC:14467"/>
    </source>
</evidence>
<proteinExistence type="evidence at protein level"/>
<keyword id="KW-0025">Alternative splicing</keyword>
<keyword id="KW-0039">Anion exchange</keyword>
<keyword id="KW-1003">Cell membrane</keyword>
<keyword id="KW-0225">Disease variant</keyword>
<keyword id="KW-0967">Endosome</keyword>
<keyword id="KW-0406">Ion transport</keyword>
<keyword id="KW-0472">Membrane</keyword>
<keyword id="KW-1267">Proteomics identification</keyword>
<keyword id="KW-1185">Reference proteome</keyword>
<keyword id="KW-0812">Transmembrane</keyword>
<keyword id="KW-1133">Transmembrane helix</keyword>
<keyword id="KW-0813">Transport</keyword>
<organism>
    <name type="scientific">Homo sapiens</name>
    <name type="common">Human</name>
    <dbReference type="NCBI Taxonomy" id="9606"/>
    <lineage>
        <taxon>Eukaryota</taxon>
        <taxon>Metazoa</taxon>
        <taxon>Chordata</taxon>
        <taxon>Craniata</taxon>
        <taxon>Vertebrata</taxon>
        <taxon>Euteleostomi</taxon>
        <taxon>Mammalia</taxon>
        <taxon>Eutheria</taxon>
        <taxon>Euarchontoglires</taxon>
        <taxon>Primates</taxon>
        <taxon>Haplorrhini</taxon>
        <taxon>Catarrhini</taxon>
        <taxon>Hominidae</taxon>
        <taxon>Homo</taxon>
    </lineage>
</organism>
<accession>Q8TE54</accession>
<accession>Q24JS8</accession>
<accession>Q8TE53</accession>
<accession>Q96RN2</accession>
<gene>
    <name evidence="26" type="primary">SLC26A7</name>
    <name evidence="24" type="synonym">SUT2</name>
</gene>
<comment type="function">
    <text evidence="1 5 6 12 13">Acts as an anion channel mediating the transport of chloride, sulfate and oxalate ions (PubMed:11834742). Mediates the transport of bromide, iodide, nitrate, gluconate, thiocyanate and bicarbonate ions (By similarity). Its permeability towards bicarbonate is weak and increases when pH is above 7 (By similarity). Mediates thiocyanate transport in retinal pigment epithelium cells (By similarity). Mediates iodide transport in the thyroid gland, playing an important role in the synthesis of thyroid hormones and the maintenance of thyroid function (PubMed:31372509). Although it is an anion channel, according to PubMed:12736153 and PubMed:32119864 it has been shown to exhibit chloride-bicarbonate exchanger activity.</text>
</comment>
<comment type="catalytic activity">
    <reaction evidence="5">
        <text>chloride(in) = chloride(out)</text>
        <dbReference type="Rhea" id="RHEA:29823"/>
        <dbReference type="ChEBI" id="CHEBI:17996"/>
    </reaction>
</comment>
<comment type="catalytic activity">
    <reaction evidence="12">
        <text>iodide(out) = iodide(in)</text>
        <dbReference type="Rhea" id="RHEA:66324"/>
        <dbReference type="ChEBI" id="CHEBI:16382"/>
    </reaction>
    <physiologicalReaction direction="right-to-left" evidence="19">
        <dbReference type="Rhea" id="RHEA:66326"/>
    </physiologicalReaction>
</comment>
<comment type="catalytic activity">
    <reaction evidence="1">
        <text>bromide(in) = bromide(out)</text>
        <dbReference type="Rhea" id="RHEA:75383"/>
        <dbReference type="ChEBI" id="CHEBI:15858"/>
    </reaction>
</comment>
<comment type="catalytic activity">
    <reaction evidence="5">
        <text>oxalate(in) = oxalate(out)</text>
        <dbReference type="Rhea" id="RHEA:76199"/>
        <dbReference type="ChEBI" id="CHEBI:30623"/>
    </reaction>
</comment>
<comment type="catalytic activity">
    <reaction evidence="1">
        <text>nitrate(in) = nitrate(out)</text>
        <dbReference type="Rhea" id="RHEA:34923"/>
        <dbReference type="ChEBI" id="CHEBI:17632"/>
    </reaction>
</comment>
<comment type="catalytic activity">
    <reaction evidence="5">
        <text>sulfate(in) = sulfate(out)</text>
        <dbReference type="Rhea" id="RHEA:34983"/>
        <dbReference type="ChEBI" id="CHEBI:16189"/>
    </reaction>
</comment>
<comment type="catalytic activity">
    <reaction evidence="1">
        <text>thiocyanate(in) = thiocyanate(out)</text>
        <dbReference type="Rhea" id="RHEA:75347"/>
        <dbReference type="ChEBI" id="CHEBI:18022"/>
    </reaction>
</comment>
<comment type="catalytic activity">
    <reaction evidence="1">
        <text>D-gluconate(in) = D-gluconate(out)</text>
        <dbReference type="Rhea" id="RHEA:76139"/>
        <dbReference type="ChEBI" id="CHEBI:18391"/>
    </reaction>
</comment>
<comment type="catalytic activity">
    <reaction evidence="1">
        <text>hydrogencarbonate(in) = hydrogencarbonate(out)</text>
        <dbReference type="Rhea" id="RHEA:28695"/>
        <dbReference type="ChEBI" id="CHEBI:17544"/>
    </reaction>
    <physiologicalReaction direction="right-to-left" evidence="1">
        <dbReference type="Rhea" id="RHEA:28697"/>
    </physiologicalReaction>
</comment>
<comment type="catalytic activity">
    <reaction evidence="6 13">
        <text>hydrogencarbonate(in) + chloride(out) = hydrogencarbonate(out) + chloride(in)</text>
        <dbReference type="Rhea" id="RHEA:72363"/>
        <dbReference type="ChEBI" id="CHEBI:17544"/>
        <dbReference type="ChEBI" id="CHEBI:17996"/>
    </reaction>
</comment>
<comment type="activity regulation">
    <text evidence="6">Is active at both alkaline and acidic pH. Activity is inhibited by 4,4'-Di-isothiocyanatostilbene-2,2'-disulfonic acid (DIDS - an inhibitor of several anion channels and transporters).</text>
</comment>
<comment type="subcellular location">
    <subcellularLocation>
        <location evidence="9 11 13">Basolateral cell membrane</location>
        <topology evidence="2">Multi-pass membrane protein</topology>
    </subcellularLocation>
    <subcellularLocation>
        <location evidence="9">Recycling endosome membrane</location>
        <topology evidence="2">Multi-pass membrane protein</topology>
    </subcellularLocation>
    <subcellularLocation>
        <location evidence="12">Apical cell membrane</location>
        <topology evidence="2">Multi-pass membrane protein</topology>
    </subcellularLocation>
    <subcellularLocation>
        <location evidence="12">Lateral cell membrane</location>
        <topology evidence="2">Multi-pass membrane protein</topology>
    </subcellularLocation>
    <text evidence="9">Expressed in the cytoplasm in recycling endosomes of medullary collecting duct cells and in acid-secreting gastric parietal cells. Targeted to the basolateral membrane in hypertonicity and potassium depletion.</text>
</comment>
<comment type="alternative products">
    <event type="alternative splicing"/>
    <isoform>
        <id>Q8TE54-1</id>
        <name evidence="4">1</name>
        <name evidence="4">1A</name>
        <name evidence="4">1B</name>
        <sequence type="displayed"/>
    </isoform>
    <isoform>
        <id>Q8TE54-2</id>
        <name evidence="4 7">2</name>
        <name evidence="7">B</name>
        <sequence type="described" ref="VSP_052689"/>
    </isoform>
</comment>
<comment type="tissue specificity">
    <text evidence="4 5 8 10 11 12">Expressed in the thyroid gland (at protein level). Expressed in tonsillar high endothelial venule endothelial cells (HEVEC), placenta and in testis, expressed in a subgroup of basal cells in the epididymal ducts.</text>
</comment>
<comment type="induction">
    <text evidence="13">Up-regulated by hyperosmolarity and down-regulated by acidic pH.</text>
</comment>
<comment type="disease">
    <text evidence="11 12 14">Disease-causing variants in SLC26A7 have been found in patients with thyroid dyshormonogenesis and congenital goitrous hypothyroidism.</text>
</comment>
<comment type="similarity">
    <text evidence="2">Belongs to the SLC26A/SulP transporter (TC 2.A.53) family.</text>
</comment>
<comment type="caution">
    <text evidence="6 13">Although it is an anion channel, according to PubMed:12736153 and PubMed:32119864 it has been shown to exhibit chloride-bicarbonate exchanger activity.</text>
</comment>
<dbReference type="EMBL" id="AJ413228">
    <property type="protein sequence ID" value="CAC88370.1"/>
    <property type="molecule type" value="mRNA"/>
</dbReference>
<dbReference type="EMBL" id="AJ413229">
    <property type="protein sequence ID" value="CAC88371.1"/>
    <property type="molecule type" value="mRNA"/>
</dbReference>
<dbReference type="EMBL" id="AJ413230">
    <property type="protein sequence ID" value="CAC88372.1"/>
    <property type="molecule type" value="mRNA"/>
</dbReference>
<dbReference type="EMBL" id="AF331521">
    <property type="protein sequence ID" value="AAK95665.1"/>
    <property type="molecule type" value="mRNA"/>
</dbReference>
<dbReference type="EMBL" id="CH471060">
    <property type="protein sequence ID" value="EAW91680.1"/>
    <property type="molecule type" value="Genomic_DNA"/>
</dbReference>
<dbReference type="EMBL" id="CH471060">
    <property type="protein sequence ID" value="EAW91679.1"/>
    <property type="molecule type" value="Genomic_DNA"/>
</dbReference>
<dbReference type="EMBL" id="BC094730">
    <property type="protein sequence ID" value="AAH94730.1"/>
    <property type="molecule type" value="mRNA"/>
</dbReference>
<dbReference type="EMBL" id="BC113866">
    <property type="protein sequence ID" value="AAI13867.1"/>
    <property type="molecule type" value="mRNA"/>
</dbReference>
<dbReference type="EMBL" id="BC114474">
    <property type="protein sequence ID" value="AAI14475.1"/>
    <property type="molecule type" value="mRNA"/>
</dbReference>
<dbReference type="CCDS" id="CCDS6254.1">
    <molecule id="Q8TE54-1"/>
</dbReference>
<dbReference type="CCDS" id="CCDS6255.1">
    <molecule id="Q8TE54-2"/>
</dbReference>
<dbReference type="RefSeq" id="NP_001269285.1">
    <molecule id="Q8TE54-1"/>
    <property type="nucleotide sequence ID" value="NM_001282356.2"/>
</dbReference>
<dbReference type="RefSeq" id="NP_001269286.1">
    <property type="nucleotide sequence ID" value="NM_001282357.1"/>
</dbReference>
<dbReference type="RefSeq" id="NP_439897.1">
    <molecule id="Q8TE54-1"/>
    <property type="nucleotide sequence ID" value="NM_052832.4"/>
</dbReference>
<dbReference type="RefSeq" id="NP_599028.1">
    <molecule id="Q8TE54-2"/>
    <property type="nucleotide sequence ID" value="NM_134266.2"/>
</dbReference>
<dbReference type="SMR" id="Q8TE54"/>
<dbReference type="BioGRID" id="125414">
    <property type="interactions" value="1"/>
</dbReference>
<dbReference type="FunCoup" id="Q8TE54">
    <property type="interactions" value="18"/>
</dbReference>
<dbReference type="STRING" id="9606.ENSP00000309504"/>
<dbReference type="TCDB" id="2.A.53.2.6">
    <property type="family name" value="the sulfate permease (sulp) family"/>
</dbReference>
<dbReference type="GlyConnect" id="2019">
    <property type="glycosylation" value="1 N-Linked glycan (1 site)"/>
</dbReference>
<dbReference type="GlyCosmos" id="Q8TE54">
    <property type="glycosylation" value="1 site, 2 glycans"/>
</dbReference>
<dbReference type="GlyGen" id="Q8TE54">
    <property type="glycosylation" value="2 sites, 2 N-linked glycans (1 site), 1 O-linked glycan (1 site)"/>
</dbReference>
<dbReference type="iPTMnet" id="Q8TE54"/>
<dbReference type="PhosphoSitePlus" id="Q8TE54"/>
<dbReference type="BioMuta" id="SLC26A7"/>
<dbReference type="DMDM" id="172045817"/>
<dbReference type="jPOST" id="Q8TE54"/>
<dbReference type="MassIVE" id="Q8TE54"/>
<dbReference type="PaxDb" id="9606-ENSP00000309504"/>
<dbReference type="PeptideAtlas" id="Q8TE54"/>
<dbReference type="ProteomicsDB" id="74394">
    <molecule id="Q8TE54-1"/>
</dbReference>
<dbReference type="ProteomicsDB" id="74395">
    <molecule id="Q8TE54-2"/>
</dbReference>
<dbReference type="Antibodypedia" id="25657">
    <property type="antibodies" value="70 antibodies from 9 providers"/>
</dbReference>
<dbReference type="DNASU" id="115111"/>
<dbReference type="Ensembl" id="ENST00000276609.8">
    <molecule id="Q8TE54-1"/>
    <property type="protein sequence ID" value="ENSP00000276609.3"/>
    <property type="gene ID" value="ENSG00000147606.9"/>
</dbReference>
<dbReference type="Ensembl" id="ENST00000309536.6">
    <molecule id="Q8TE54-2"/>
    <property type="protein sequence ID" value="ENSP00000309504.2"/>
    <property type="gene ID" value="ENSG00000147606.9"/>
</dbReference>
<dbReference type="Ensembl" id="ENST00000523719.5">
    <molecule id="Q8TE54-1"/>
    <property type="protein sequence ID" value="ENSP00000428849.1"/>
    <property type="gene ID" value="ENSG00000147606.9"/>
</dbReference>
<dbReference type="Ensembl" id="ENST00000617233.2">
    <molecule id="Q8TE54-1"/>
    <property type="protein sequence ID" value="ENSP00000482549.1"/>
    <property type="gene ID" value="ENSG00000147606.9"/>
</dbReference>
<dbReference type="GeneID" id="115111"/>
<dbReference type="KEGG" id="hsa:115111"/>
<dbReference type="MANE-Select" id="ENST00000276609.8">
    <property type="protein sequence ID" value="ENSP00000276609.3"/>
    <property type="RefSeq nucleotide sequence ID" value="NM_052832.4"/>
    <property type="RefSeq protein sequence ID" value="NP_439897.1"/>
</dbReference>
<dbReference type="UCSC" id="uc003yex.5">
    <molecule id="Q8TE54-1"/>
    <property type="organism name" value="human"/>
</dbReference>
<dbReference type="AGR" id="HGNC:14467"/>
<dbReference type="CTD" id="115111"/>
<dbReference type="DisGeNET" id="115111"/>
<dbReference type="GeneCards" id="SLC26A7"/>
<dbReference type="HGNC" id="HGNC:14467">
    <property type="gene designation" value="SLC26A7"/>
</dbReference>
<dbReference type="HPA" id="ENSG00000147606">
    <property type="expression patterns" value="Tissue enriched (thyroid)"/>
</dbReference>
<dbReference type="MalaCards" id="SLC26A7"/>
<dbReference type="MIM" id="608479">
    <property type="type" value="gene"/>
</dbReference>
<dbReference type="neXtProt" id="NX_Q8TE54"/>
<dbReference type="OpenTargets" id="ENSG00000147606"/>
<dbReference type="PharmGKB" id="PA37884"/>
<dbReference type="VEuPathDB" id="HostDB:ENSG00000147606"/>
<dbReference type="eggNOG" id="KOG0236">
    <property type="taxonomic scope" value="Eukaryota"/>
</dbReference>
<dbReference type="GeneTree" id="ENSGT01070000253775"/>
<dbReference type="HOGENOM" id="CLU_003182_9_5_1"/>
<dbReference type="InParanoid" id="Q8TE54"/>
<dbReference type="OMA" id="LDWSFIQ"/>
<dbReference type="OrthoDB" id="288203at2759"/>
<dbReference type="PAN-GO" id="Q8TE54">
    <property type="GO annotations" value="7 GO annotations based on evolutionary models"/>
</dbReference>
<dbReference type="PhylomeDB" id="Q8TE54"/>
<dbReference type="TreeFam" id="TF313784"/>
<dbReference type="PathwayCommons" id="Q8TE54"/>
<dbReference type="Reactome" id="R-HSA-427601">
    <property type="pathway name" value="Multifunctional anion exchangers"/>
</dbReference>
<dbReference type="SignaLink" id="Q8TE54"/>
<dbReference type="BioGRID-ORCS" id="115111">
    <property type="hits" value="11 hits in 1153 CRISPR screens"/>
</dbReference>
<dbReference type="ChiTaRS" id="SLC26A7">
    <property type="organism name" value="human"/>
</dbReference>
<dbReference type="GeneWiki" id="SLC26A7"/>
<dbReference type="GenomeRNAi" id="115111"/>
<dbReference type="Pharos" id="Q8TE54">
    <property type="development level" value="Tbio"/>
</dbReference>
<dbReference type="PRO" id="PR:Q8TE54"/>
<dbReference type="Proteomes" id="UP000005640">
    <property type="component" value="Chromosome 8"/>
</dbReference>
<dbReference type="RNAct" id="Q8TE54">
    <property type="molecule type" value="protein"/>
</dbReference>
<dbReference type="Bgee" id="ENSG00000147606">
    <property type="expression patterns" value="Expressed in thyroid gland and 121 other cell types or tissues"/>
</dbReference>
<dbReference type="ExpressionAtlas" id="Q8TE54">
    <property type="expression patterns" value="baseline and differential"/>
</dbReference>
<dbReference type="GO" id="GO:0016324">
    <property type="term" value="C:apical plasma membrane"/>
    <property type="evidence" value="ECO:0000314"/>
    <property type="project" value="UniProtKB"/>
</dbReference>
<dbReference type="GO" id="GO:0016323">
    <property type="term" value="C:basolateral plasma membrane"/>
    <property type="evidence" value="ECO:0000314"/>
    <property type="project" value="UniProtKB"/>
</dbReference>
<dbReference type="GO" id="GO:0005737">
    <property type="term" value="C:cytoplasm"/>
    <property type="evidence" value="ECO:0000314"/>
    <property type="project" value="UniProtKB"/>
</dbReference>
<dbReference type="GO" id="GO:0005768">
    <property type="term" value="C:endosome"/>
    <property type="evidence" value="ECO:0000314"/>
    <property type="project" value="UniProtKB"/>
</dbReference>
<dbReference type="GO" id="GO:0016328">
    <property type="term" value="C:lateral plasma membrane"/>
    <property type="evidence" value="ECO:0000314"/>
    <property type="project" value="UniProtKB"/>
</dbReference>
<dbReference type="GO" id="GO:0005886">
    <property type="term" value="C:plasma membrane"/>
    <property type="evidence" value="ECO:0000318"/>
    <property type="project" value="GO_Central"/>
</dbReference>
<dbReference type="GO" id="GO:0055038">
    <property type="term" value="C:recycling endosome membrane"/>
    <property type="evidence" value="ECO:0007669"/>
    <property type="project" value="UniProtKB-SubCell"/>
</dbReference>
<dbReference type="GO" id="GO:0015106">
    <property type="term" value="F:bicarbonate transmembrane transporter activity"/>
    <property type="evidence" value="ECO:0000250"/>
    <property type="project" value="UniProtKB"/>
</dbReference>
<dbReference type="GO" id="GO:0005254">
    <property type="term" value="F:chloride channel activity"/>
    <property type="evidence" value="ECO:0000314"/>
    <property type="project" value="UniProtKB"/>
</dbReference>
<dbReference type="GO" id="GO:0015108">
    <property type="term" value="F:chloride transmembrane transporter activity"/>
    <property type="evidence" value="ECO:0000318"/>
    <property type="project" value="GO_Central"/>
</dbReference>
<dbReference type="GO" id="GO:0140900">
    <property type="term" value="F:chloride:bicarbonate antiporter activity"/>
    <property type="evidence" value="ECO:0000314"/>
    <property type="project" value="UniProtKB"/>
</dbReference>
<dbReference type="GO" id="GO:0019531">
    <property type="term" value="F:oxalate transmembrane transporter activity"/>
    <property type="evidence" value="ECO:0000314"/>
    <property type="project" value="UniProtKB"/>
</dbReference>
<dbReference type="GO" id="GO:0015116">
    <property type="term" value="F:sulfate transmembrane transporter activity"/>
    <property type="evidence" value="ECO:0000314"/>
    <property type="project" value="UniProtKB"/>
</dbReference>
<dbReference type="GO" id="GO:0015701">
    <property type="term" value="P:bicarbonate transport"/>
    <property type="evidence" value="ECO:0000250"/>
    <property type="project" value="UniProtKB"/>
</dbReference>
<dbReference type="GO" id="GO:1902476">
    <property type="term" value="P:chloride transmembrane transport"/>
    <property type="evidence" value="ECO:0000318"/>
    <property type="project" value="GO_Central"/>
</dbReference>
<dbReference type="GO" id="GO:0006821">
    <property type="term" value="P:chloride transport"/>
    <property type="evidence" value="ECO:0000314"/>
    <property type="project" value="UniProtKB"/>
</dbReference>
<dbReference type="GO" id="GO:0001696">
    <property type="term" value="P:gastric acid secretion"/>
    <property type="evidence" value="ECO:0007669"/>
    <property type="project" value="Ensembl"/>
</dbReference>
<dbReference type="GO" id="GO:0035429">
    <property type="term" value="P:gluconate transmembrane transport"/>
    <property type="evidence" value="ECO:0007669"/>
    <property type="project" value="Ensembl"/>
</dbReference>
<dbReference type="GO" id="GO:0015705">
    <property type="term" value="P:iodide transport"/>
    <property type="evidence" value="ECO:0000315"/>
    <property type="project" value="UniProtKB"/>
</dbReference>
<dbReference type="GO" id="GO:0006811">
    <property type="term" value="P:monoatomic ion transport"/>
    <property type="evidence" value="ECO:0000304"/>
    <property type="project" value="Reactome"/>
</dbReference>
<dbReference type="GO" id="GO:0015706">
    <property type="term" value="P:nitrate transmembrane transport"/>
    <property type="evidence" value="ECO:0007669"/>
    <property type="project" value="Ensembl"/>
</dbReference>
<dbReference type="GO" id="GO:0019532">
    <property type="term" value="P:oxalate transport"/>
    <property type="evidence" value="ECO:0000314"/>
    <property type="project" value="UniProtKB"/>
</dbReference>
<dbReference type="GO" id="GO:1902358">
    <property type="term" value="P:sulfate transmembrane transport"/>
    <property type="evidence" value="ECO:0000314"/>
    <property type="project" value="UniProtKB"/>
</dbReference>
<dbReference type="GO" id="GO:0006590">
    <property type="term" value="P:thyroid hormone generation"/>
    <property type="evidence" value="ECO:0007669"/>
    <property type="project" value="Ensembl"/>
</dbReference>
<dbReference type="CDD" id="cd07042">
    <property type="entry name" value="STAS_SulP_like_sulfate_transporter"/>
    <property type="match status" value="1"/>
</dbReference>
<dbReference type="FunFam" id="3.30.750.24:FF:000016">
    <property type="entry name" value="Anion exchange transporter"/>
    <property type="match status" value="1"/>
</dbReference>
<dbReference type="Gene3D" id="3.30.750.24">
    <property type="entry name" value="STAS domain"/>
    <property type="match status" value="1"/>
</dbReference>
<dbReference type="InterPro" id="IPR011547">
    <property type="entry name" value="SLC26A/SulP_dom"/>
</dbReference>
<dbReference type="InterPro" id="IPR001902">
    <property type="entry name" value="SLC26A/SulP_fam"/>
</dbReference>
<dbReference type="InterPro" id="IPR002645">
    <property type="entry name" value="STAS_dom"/>
</dbReference>
<dbReference type="InterPro" id="IPR036513">
    <property type="entry name" value="STAS_dom_sf"/>
</dbReference>
<dbReference type="PANTHER" id="PTHR11814">
    <property type="entry name" value="SULFATE TRANSPORTER"/>
    <property type="match status" value="1"/>
</dbReference>
<dbReference type="Pfam" id="PF01740">
    <property type="entry name" value="STAS"/>
    <property type="match status" value="1"/>
</dbReference>
<dbReference type="Pfam" id="PF00916">
    <property type="entry name" value="Sulfate_transp"/>
    <property type="match status" value="1"/>
</dbReference>
<dbReference type="SUPFAM" id="SSF52091">
    <property type="entry name" value="SpoIIaa-like"/>
    <property type="match status" value="1"/>
</dbReference>
<dbReference type="PROSITE" id="PS50801">
    <property type="entry name" value="STAS"/>
    <property type="match status" value="1"/>
</dbReference>
<reference evidence="18 24" key="1">
    <citation type="journal article" date="2002" name="Genomics">
        <title>Molecular cloning of SLC26A7, a novel member of the SLC26 sulfate/anion transporter family, from high endothelial venules and kidney.</title>
        <authorList>
            <person name="Vincourt J.-B."/>
            <person name="Jullien D."/>
            <person name="Kossida S."/>
            <person name="Amalric F."/>
            <person name="Girard J.-P."/>
        </authorList>
    </citation>
    <scope>NUCLEOTIDE SEQUENCE [MRNA] (ISOFORMS 1 AND 2)</scope>
    <scope>TISSUE SPECIFICITY</scope>
    <source>
        <tissue evidence="23">Endothelial cell</tissue>
        <tissue evidence="24">Kidney</tissue>
    </source>
</reference>
<reference evidence="18 22" key="2">
    <citation type="journal article" date="2002" name="J. Biol. Chem.">
        <title>Functional characterization of three novel tissue-specific anion exchangers SLC26A7, -A8, and -A9.</title>
        <authorList>
            <person name="Lohi H."/>
            <person name="Kujala M."/>
            <person name="Maekelae S."/>
            <person name="Lehtonen E."/>
            <person name="Kestilae M."/>
            <person name="Saarialho-Kere U."/>
            <person name="Markovich D."/>
            <person name="Kere J."/>
        </authorList>
    </citation>
    <scope>NUCLEOTIDE SEQUENCE [MRNA] (ISOFORM 1)</scope>
    <scope>FUNCTION</scope>
    <scope>TISSUE SPECIFICITY</scope>
    <scope>TRANSPORTER ACTIVITY</scope>
</reference>
<reference evidence="25" key="3">
    <citation type="submission" date="2005-07" db="EMBL/GenBank/DDBJ databases">
        <authorList>
            <person name="Mural R.J."/>
            <person name="Istrail S."/>
            <person name="Sutton G.G."/>
            <person name="Florea L."/>
            <person name="Halpern A.L."/>
            <person name="Mobarry C.M."/>
            <person name="Lippert R."/>
            <person name="Walenz B."/>
            <person name="Shatkay H."/>
            <person name="Dew I."/>
            <person name="Miller J.R."/>
            <person name="Flanigan M.J."/>
            <person name="Edwards N.J."/>
            <person name="Bolanos R."/>
            <person name="Fasulo D."/>
            <person name="Halldorsson B.V."/>
            <person name="Hannenhalli S."/>
            <person name="Turner R."/>
            <person name="Yooseph S."/>
            <person name="Lu F."/>
            <person name="Nusskern D.R."/>
            <person name="Shue B.C."/>
            <person name="Zheng X.H."/>
            <person name="Zhong F."/>
            <person name="Delcher A.L."/>
            <person name="Huson D.H."/>
            <person name="Kravitz S.A."/>
            <person name="Mouchard L."/>
            <person name="Reinert K."/>
            <person name="Remington K.A."/>
            <person name="Clark A.G."/>
            <person name="Waterman M.S."/>
            <person name="Eichler E.E."/>
            <person name="Adams M.D."/>
            <person name="Hunkapiller M.W."/>
            <person name="Myers E.W."/>
            <person name="Venter J.C."/>
        </authorList>
    </citation>
    <scope>NUCLEOTIDE SEQUENCE [LARGE SCALE GENOMIC DNA]</scope>
</reference>
<reference evidence="18 21" key="4">
    <citation type="journal article" date="2004" name="Genome Res.">
        <title>The status, quality, and expansion of the NIH full-length cDNA project: the Mammalian Gene Collection (MGC).</title>
        <authorList>
            <consortium name="The MGC Project Team"/>
        </authorList>
    </citation>
    <scope>NUCLEOTIDE SEQUENCE [LARGE SCALE MRNA] (ISOFORMS 1 AND 2)</scope>
    <source>
        <tissue evidence="20">Placenta</tissue>
    </source>
</reference>
<reference evidence="18" key="5">
    <citation type="journal article" date="2003" name="Am. J. Physiol.">
        <title>Identification of a basolateral Cl-/HCO3- exchanger specific to gastric parietal cells.</title>
        <authorList>
            <person name="Petrovic S."/>
            <person name="Ju X."/>
            <person name="Barone S."/>
            <person name="Seidler U."/>
            <person name="Alper S.L."/>
            <person name="Lohi H."/>
            <person name="Kere J."/>
            <person name="Soleimani M."/>
        </authorList>
    </citation>
    <scope>IDENTIFICATION</scope>
    <scope>FUNCTION</scope>
    <scope>ACTIVITY REGULATION</scope>
    <scope>TRANSPORTER ACTIVITY</scope>
</reference>
<reference evidence="18" key="6">
    <citation type="journal article" date="2005" name="Nephron Exp. Nephrol.">
        <title>SLC26A6 and SLC26A7 anion exchangers have a distinct distribution in human kidney.</title>
        <authorList>
            <person name="Kujala M."/>
            <person name="Tienari J."/>
            <person name="Lohi H."/>
            <person name="Elomaa O."/>
            <person name="Sariola H."/>
            <person name="Lehtonen E."/>
            <person name="Kere J."/>
        </authorList>
    </citation>
    <scope>TISSUE SPECIFICITY</scope>
</reference>
<reference evidence="18" key="7">
    <citation type="journal article" date="2006" name="J. Am. Soc. Nephrol.">
        <title>Chloride/bicarbonate exchanger SLC26A7 is localized in endosomes in medullary collecting duct cells and is targeted to the basolateral membrane in hypertonicity and potassium depletion.</title>
        <authorList>
            <person name="Xu J."/>
            <person name="Worrell R.T."/>
            <person name="Li H.C."/>
            <person name="Barone S.L."/>
            <person name="Petrovic S."/>
            <person name="Amlal H."/>
            <person name="Soleimani M."/>
        </authorList>
    </citation>
    <scope>SUBCELLULAR LOCATION</scope>
</reference>
<reference evidence="18" key="8">
    <citation type="journal article" date="2007" name="Reproduction">
        <title>Expression of ion transport-associated proteins in human efferent and epididymal ducts.</title>
        <authorList>
            <person name="Kujala M."/>
            <person name="Hihnala S."/>
            <person name="Tienari J."/>
            <person name="Kaunisto K."/>
            <person name="Hastbacka J."/>
            <person name="Holmberg C."/>
            <person name="Kere J."/>
            <person name="Hoglund P."/>
        </authorList>
    </citation>
    <scope>TISSUE SPECIFICITY</scope>
</reference>
<reference key="9">
    <citation type="journal article" date="2020" name="Biochim. Biophys. Acta">
        <title>SLC26A7 protein is a chloride/bicarbonate exchanger and its abundance is osmolarity- and pH-dependent in renal epithelial cells.</title>
        <authorList>
            <person name="Ullah A.K.M.S."/>
            <person name="Rumley A.C."/>
            <person name="Peleh V."/>
            <person name="Fernandes D."/>
            <person name="Almomani E.Y."/>
            <person name="Berrini M."/>
            <person name="Lashhab R."/>
            <person name="Touret N."/>
            <person name="Alexander R.T."/>
            <person name="Herrmann J.M."/>
            <person name="Cordat E."/>
        </authorList>
    </citation>
    <scope>FUNCTION</scope>
    <scope>TRANSPORTER ACTIVITY</scope>
    <scope>SUBCELLULAR LOCATION</scope>
    <scope>INDUCTION</scope>
</reference>
<reference key="10">
    <citation type="journal article" date="2018" name="JCI Insight">
        <title>Homozygous loss-of-function mutations in SLC26A7 cause goitrous congenital hypothyroidism.</title>
        <authorList>
            <person name="Cangul H."/>
            <person name="Liao X.H."/>
            <person name="Schoenmakers E."/>
            <person name="Kero J."/>
            <person name="Barone S."/>
            <person name="Srichomkwun P."/>
            <person name="Iwayama H."/>
            <person name="Serra E.G."/>
            <person name="Saglam H."/>
            <person name="Eren E."/>
            <person name="Tarim O."/>
            <person name="Nicholas A.K."/>
            <person name="Zvetkova I."/>
            <person name="Anderson C.A."/>
            <person name="Frankl F.E.K."/>
            <person name="Boelaert K."/>
            <person name="Ojaniemi M."/>
            <person name="Jaeaeskelaeinen J."/>
            <person name="Patyra K."/>
            <person name="Loef C."/>
            <person name="Williams E.D."/>
            <person name="Soleimani M."/>
            <person name="Barrett T."/>
            <person name="Maher E.R."/>
            <person name="Chatterjee V.K."/>
            <person name="Refetoff S."/>
            <person name="Schoenmakers N."/>
        </authorList>
    </citation>
    <scope>VARIANT 228-LEU--VAL-656 DEL</scope>
    <scope>SUBCELLULAR LOCATION</scope>
    <scope>TISSUE SPECIFICITY</scope>
</reference>
<reference key="11">
    <citation type="journal article" date="2019" name="Commun. Biol.">
        <title>Congenital goitrous hypothyroidism is caused by dysfunction of the iodide transporter SLC26A7.</title>
        <authorList>
            <person name="Ishii J."/>
            <person name="Suzuki A."/>
            <person name="Kimura T."/>
            <person name="Tateyama M."/>
            <person name="Tanaka T."/>
            <person name="Yazawa T."/>
            <person name="Arimasu Y."/>
            <person name="Chen I.S."/>
            <person name="Aoyama K."/>
            <person name="Kubo Y."/>
            <person name="Saitoh S."/>
            <person name="Mizuno H."/>
            <person name="Kamma H."/>
        </authorList>
    </citation>
    <scope>VARIANT 501-GLN--VAL-656 DEL</scope>
    <scope>CHARACTERIZATION OF VARIANT 501-GLN--VAL-656 DEL</scope>
    <scope>FUNCTION</scope>
    <scope>TRANSPORTER ACTIVITY</scope>
    <scope>SUBCELLULAR LOCATION</scope>
    <scope>TISSUE SPECIFICITY</scope>
</reference>
<reference key="12">
    <citation type="journal article" date="2020" name="Thyroid">
        <title>A Novel Homozygous Mutation in the Solute Carrier Family 26 Member 7 Gene Causes Thyroid Dyshormonogenesis in a Girl with Congenital Hypothyroidism.</title>
        <authorList>
            <person name="Hermanns P."/>
            <person name="Classen C."/>
            <person name="Pohlenz J."/>
        </authorList>
    </citation>
    <scope>INVOLVEMENT IN THYROID DYSHORMONOGENESIS AND CONGENITAL GOITROUS HYPOTHYROIDISM</scope>
</reference>
<protein>
    <recommendedName>
        <fullName>Anion exchange transporter</fullName>
    </recommendedName>
    <alternativeName>
        <fullName>Solute carrier family 26 member 7</fullName>
    </alternativeName>
</protein>
<feature type="chain" id="PRO_0000320681" description="Anion exchange transporter">
    <location>
        <begin position="1"/>
        <end position="656"/>
    </location>
</feature>
<feature type="topological domain" description="Cytoplasmic" evidence="2">
    <location>
        <begin position="1"/>
        <end position="75"/>
    </location>
</feature>
<feature type="transmembrane region" description="Helical" evidence="2">
    <location>
        <begin position="76"/>
        <end position="96"/>
    </location>
</feature>
<feature type="topological domain" description="Extracellular" evidence="2">
    <location>
        <begin position="97"/>
        <end position="144"/>
    </location>
</feature>
<feature type="transmembrane region" description="Helical" evidence="2">
    <location>
        <begin position="145"/>
        <end position="165"/>
    </location>
</feature>
<feature type="topological domain" description="Cytoplasmic" evidence="2">
    <location>
        <position position="166"/>
    </location>
</feature>
<feature type="transmembrane region" description="Helical" evidence="2">
    <location>
        <begin position="167"/>
        <end position="187"/>
    </location>
</feature>
<feature type="topological domain" description="Extracellular" evidence="2">
    <location>
        <begin position="188"/>
        <end position="202"/>
    </location>
</feature>
<feature type="transmembrane region" description="Helical" evidence="2">
    <location>
        <begin position="203"/>
        <end position="223"/>
    </location>
</feature>
<feature type="topological domain" description="Cytoplasmic" evidence="2">
    <location>
        <begin position="224"/>
        <end position="227"/>
    </location>
</feature>
<feature type="transmembrane region" description="Helical" evidence="2">
    <location>
        <begin position="228"/>
        <end position="248"/>
    </location>
</feature>
<feature type="topological domain" description="Extracellular" evidence="2">
    <location>
        <begin position="249"/>
        <end position="254"/>
    </location>
</feature>
<feature type="transmembrane region" description="Helical" evidence="2">
    <location>
        <begin position="255"/>
        <end position="275"/>
    </location>
</feature>
<feature type="topological domain" description="Cytoplasmic" evidence="2">
    <location>
        <begin position="276"/>
        <end position="306"/>
    </location>
</feature>
<feature type="transmembrane region" description="Helical" evidence="2">
    <location>
        <begin position="307"/>
        <end position="327"/>
    </location>
</feature>
<feature type="topological domain" description="Extracellular" evidence="2">
    <location>
        <begin position="328"/>
        <end position="343"/>
    </location>
</feature>
<feature type="transmembrane region" description="Helical" evidence="2">
    <location>
        <begin position="344"/>
        <end position="364"/>
    </location>
</feature>
<feature type="topological domain" description="Cytoplasmic" evidence="2">
    <location>
        <begin position="365"/>
        <end position="383"/>
    </location>
</feature>
<feature type="transmembrane region" description="Helical" evidence="2">
    <location>
        <begin position="384"/>
        <end position="404"/>
    </location>
</feature>
<feature type="transmembrane region" description="Helical" evidence="2">
    <location>
        <begin position="405"/>
        <end position="425"/>
    </location>
</feature>
<feature type="topological domain" description="Extracellular" evidence="2">
    <location>
        <begin position="426"/>
        <end position="448"/>
    </location>
</feature>
<feature type="transmembrane region" description="Helical" evidence="2">
    <location>
        <begin position="449"/>
        <end position="469"/>
    </location>
</feature>
<feature type="topological domain" description="Cytoplasmic" evidence="2">
    <location>
        <begin position="470"/>
        <end position="656"/>
    </location>
</feature>
<feature type="domain" description="STAS" evidence="3">
    <location>
        <begin position="492"/>
        <end position="641"/>
    </location>
</feature>
<feature type="region of interest" description="Membrane targeting" evidence="9">
    <location>
        <begin position="641"/>
        <end position="656"/>
    </location>
</feature>
<feature type="splice variant" id="VSP_052689" description="In isoform 2." evidence="15 16 17">
    <original>NLSKLSDHSEV</original>
    <variation>ASYKLLFDNLDLPTMPPL</variation>
    <location>
        <begin position="646"/>
        <end position="656"/>
    </location>
</feature>
<feature type="sequence variant" id="VAR_053666" description="In dbSNP:rs16912250.">
    <original>I</original>
    <variation>V</variation>
    <location>
        <position position="215"/>
    </location>
</feature>
<feature type="sequence variant" id="VAR_088113" description="Found in patients with thyroid dyshormonogenesis and congenital goitrous hypothyroidism; likely pathogenic." evidence="11">
    <location>
        <begin position="228"/>
        <end position="656"/>
    </location>
</feature>
<feature type="sequence variant" id="VAR_053667" description="In dbSNP:rs34921316.">
    <original>V</original>
    <variation>G</variation>
    <location>
        <position position="381"/>
    </location>
</feature>
<feature type="sequence variant" id="VAR_088114" description="Found in patients with thyroid dyshormonogenesis and congenital goitrous hypothyroidism; likely pathogenic; loss of membrane localization and iodide transporter activity." evidence="12">
    <location>
        <begin position="501"/>
        <end position="656"/>
    </location>
</feature>
<feature type="sequence conflict" description="In Ref. 1; CAC88371." evidence="18" ref="1">
    <original>T</original>
    <variation>A</variation>
    <location>
        <position position="132"/>
    </location>
</feature>
<feature type="sequence conflict" description="In Ref. 4; AAI14475." evidence="18" ref="4">
    <original>T</original>
    <variation>A</variation>
    <location>
        <position position="521"/>
    </location>
</feature>
<name>S26A7_HUMAN</name>
<sequence length="656" mass="72213">MTGAKRKKKSMLWSKMHTPQCEDIIQWCRRRLPILDWAPHYNLKENLLPDTVSGIMLAVQQVTQGLAFAVLSSVHPVFGLYGSLFPAIIYAIFGMGHHVATGTFALTSLISANAVERIVPQNMQNLTTQSNTSVLGLSDFEMQRIHVAAAVSFLGGVIQVAMFVLQLGSATFVVTEPVISAMTTGAATHVVTSQVKYLLGMKMPYISGPLGFFYIYAYVFENIKSVRLEALLLSLLSIVVLVLVKELNEQFKRKIKVVLPVDLVLIIAASFACYCTNMENTYGLEVVGHIPQGIPSPRAPPMNILSAVITEAFGVALVGYVASLALAQGSAKKFKYSIDDNQEFLAHGLSNIVSSFFFCIPSAAAMGRTAGLYSTGAKTQVACLISCIFVLIVIYAIGPLLYWLPMCVLASIIVVGLKGMLIQFRDLKKYWNVDKIDWGIWVSTYVFTICFAANVGLLFGVVCTIAIVIGRFPRAMTVSIKNMKEMEFKVKTEMDSETLQQVKIISINNPLVFLNAKKFYTDLMNMIQKENACNQPLDDISKCEQNTLLNSLSNGNCNEEASQSCPNEKCYLILDCSGFTFFDYSGVSMLVEVYMDCKGRSVDVLLAHCTASLIKAMTYYGNLDSEKPIFFESVSAAISHIHSNKNLSKLSDHSEV</sequence>